<reference key="1">
    <citation type="journal article" date="2006" name="J. Bacteriol.">
        <title>Pathogenomic sequence analysis of Bacillus cereus and Bacillus thuringiensis isolates closely related to Bacillus anthracis.</title>
        <authorList>
            <person name="Han C.S."/>
            <person name="Xie G."/>
            <person name="Challacombe J.F."/>
            <person name="Altherr M.R."/>
            <person name="Bhotika S.S."/>
            <person name="Bruce D."/>
            <person name="Campbell C.S."/>
            <person name="Campbell M.L."/>
            <person name="Chen J."/>
            <person name="Chertkov O."/>
            <person name="Cleland C."/>
            <person name="Dimitrijevic M."/>
            <person name="Doggett N.A."/>
            <person name="Fawcett J.J."/>
            <person name="Glavina T."/>
            <person name="Goodwin L.A."/>
            <person name="Hill K.K."/>
            <person name="Hitchcock P."/>
            <person name="Jackson P.J."/>
            <person name="Keim P."/>
            <person name="Kewalramani A.R."/>
            <person name="Longmire J."/>
            <person name="Lucas S."/>
            <person name="Malfatti S."/>
            <person name="McMurry K."/>
            <person name="Meincke L.J."/>
            <person name="Misra M."/>
            <person name="Moseman B.L."/>
            <person name="Mundt M."/>
            <person name="Munk A.C."/>
            <person name="Okinaka R.T."/>
            <person name="Parson-Quintana B."/>
            <person name="Reilly L.P."/>
            <person name="Richardson P."/>
            <person name="Robinson D.L."/>
            <person name="Rubin E."/>
            <person name="Saunders E."/>
            <person name="Tapia R."/>
            <person name="Tesmer J.G."/>
            <person name="Thayer N."/>
            <person name="Thompson L.S."/>
            <person name="Tice H."/>
            <person name="Ticknor L.O."/>
            <person name="Wills P.L."/>
            <person name="Brettin T.S."/>
            <person name="Gilna P."/>
        </authorList>
    </citation>
    <scope>NUCLEOTIDE SEQUENCE [LARGE SCALE GENOMIC DNA]</scope>
    <source>
        <strain>97-27</strain>
    </source>
</reference>
<name>Y4649_BACHK</name>
<accession>Q6HBW7</accession>
<gene>
    <name type="ordered locus">BT9727_4649</name>
</gene>
<dbReference type="EMBL" id="AE017355">
    <property type="protein sequence ID" value="AAT62551.1"/>
    <property type="molecule type" value="Genomic_DNA"/>
</dbReference>
<dbReference type="RefSeq" id="WP_000595027.1">
    <property type="nucleotide sequence ID" value="NC_005957.1"/>
</dbReference>
<dbReference type="RefSeq" id="YP_038959.1">
    <property type="nucleotide sequence ID" value="NC_005957.1"/>
</dbReference>
<dbReference type="SMR" id="Q6HBW7"/>
<dbReference type="KEGG" id="btk:BT9727_4649"/>
<dbReference type="PATRIC" id="fig|281309.8.peg.4946"/>
<dbReference type="HOGENOM" id="CLU_182025_0_0_9"/>
<dbReference type="PRO" id="PR:Q6HBW7"/>
<dbReference type="Proteomes" id="UP000001301">
    <property type="component" value="Chromosome"/>
</dbReference>
<dbReference type="HAMAP" id="MF_01542">
    <property type="entry name" value="UPF0349"/>
    <property type="match status" value="1"/>
</dbReference>
<dbReference type="InterPro" id="IPR009910">
    <property type="entry name" value="DUF1450"/>
</dbReference>
<dbReference type="InterPro" id="IPR022916">
    <property type="entry name" value="UPF0349"/>
</dbReference>
<dbReference type="NCBIfam" id="NF010190">
    <property type="entry name" value="PRK13669.1"/>
    <property type="match status" value="1"/>
</dbReference>
<dbReference type="Pfam" id="PF07293">
    <property type="entry name" value="DUF1450"/>
    <property type="match status" value="1"/>
</dbReference>
<protein>
    <recommendedName>
        <fullName evidence="1">UPF0349 protein BT9727_4649</fullName>
    </recommendedName>
</protein>
<feature type="chain" id="PRO_0000165886" description="UPF0349 protein BT9727_4649">
    <location>
        <begin position="1"/>
        <end position="79"/>
    </location>
</feature>
<organism>
    <name type="scientific">Bacillus thuringiensis subsp. konkukian (strain 97-27)</name>
    <dbReference type="NCBI Taxonomy" id="281309"/>
    <lineage>
        <taxon>Bacteria</taxon>
        <taxon>Bacillati</taxon>
        <taxon>Bacillota</taxon>
        <taxon>Bacilli</taxon>
        <taxon>Bacillales</taxon>
        <taxon>Bacillaceae</taxon>
        <taxon>Bacillus</taxon>
        <taxon>Bacillus cereus group</taxon>
    </lineage>
</organism>
<proteinExistence type="inferred from homology"/>
<evidence type="ECO:0000255" key="1">
    <source>
        <dbReference type="HAMAP-Rule" id="MF_01542"/>
    </source>
</evidence>
<comment type="similarity">
    <text evidence="1">Belongs to the UPF0349 family.</text>
</comment>
<sequence>MIKPLIEFCVGNLASGSQAALEKLEKDPNLDVMEYGCLGYCGICFEGPFALVNGEVVQGSTVEELVNNVYEYLDENPMF</sequence>